<comment type="function">
    <text>TS is a member of the terpene cyclase group of enzymes. It catalyzes the isomerization and cyclization of farnesyl pyro-phosphate to form trichodiene, the first cyclic intermediate in the biosynthetic pathway for trichothecenes. It serves to branch trichothecene biosynthesis from the isoprenoid pathway.</text>
</comment>
<comment type="catalytic activity">
    <reaction>
        <text>(2E,6E)-farnesyl diphosphate = trichodiene + diphosphate</text>
        <dbReference type="Rhea" id="RHEA:12052"/>
        <dbReference type="ChEBI" id="CHEBI:15861"/>
        <dbReference type="ChEBI" id="CHEBI:33019"/>
        <dbReference type="ChEBI" id="CHEBI:175763"/>
        <dbReference type="EC" id="4.2.3.6"/>
    </reaction>
</comment>
<comment type="pathway">
    <text>Sesquiterpene biosynthesis; trichothecene biosynthesis.</text>
</comment>
<comment type="miscellaneous">
    <text>Trichothecenes are sesquiterpenoid toxins that act by inhibiting protein biosynthesis.</text>
</comment>
<comment type="similarity">
    <text evidence="1">Belongs to the trichodiene synthase family.</text>
</comment>
<proteinExistence type="inferred from homology"/>
<organism>
    <name type="scientific">Fusarium culmorum</name>
    <dbReference type="NCBI Taxonomy" id="5516"/>
    <lineage>
        <taxon>Eukaryota</taxon>
        <taxon>Fungi</taxon>
        <taxon>Dikarya</taxon>
        <taxon>Ascomycota</taxon>
        <taxon>Pezizomycotina</taxon>
        <taxon>Sordariomycetes</taxon>
        <taxon>Hypocreomycetidae</taxon>
        <taxon>Hypocreales</taxon>
        <taxon>Nectriaceae</taxon>
        <taxon>Fusarium</taxon>
    </lineage>
</organism>
<reference key="1">
    <citation type="journal article" date="2002" name="Proc. Natl. Acad. Sci. U.S.A.">
        <title>Ancestral polymorphism and adaptive evolution in the trichothecene mycotoxin gene cluster of phytopathogenic Fusarium.</title>
        <authorList>
            <person name="Ward T.J."/>
            <person name="Bielawski J.P."/>
            <person name="Kistler H.C."/>
            <person name="Sullivan E."/>
            <person name="O'Donnell K."/>
        </authorList>
    </citation>
    <scope>NUCLEOTIDE SEQUENCE [GENOMIC DNA]</scope>
    <source>
        <strain>CBS 110269 / FRC R-5321 / MRC 1787 / NRRL 3288</strain>
        <strain>CBS 417.86 / FRC R-8504 / IMI 309344 / NRRL 25475</strain>
    </source>
</reference>
<reference key="2">
    <citation type="submission" date="2002-07" db="EMBL/GenBank/DDBJ databases">
        <title>Trichodiene synthase (Tri5) targeted PCR for identification of Fusarium culmorum, F. graminearum, F. poae and F. sporotrichioides.</title>
        <authorList>
            <person name="Eriksson A.R.B."/>
            <person name="Schnurer J."/>
        </authorList>
    </citation>
    <scope>NUCLEOTIDE SEQUENCE [GENOMIC DNA]</scope>
    <source>
        <strain>IBT2303</strain>
    </source>
</reference>
<sequence>MENFPTEYFLNTSVRLLEYIRYRDSNYTREERIENLHYAYNKAAHHFAQPRQQQMLKVDPKRLQASLQTIVGMVVYSWAKVSKECMADLSIHYTYTLVLDDSSDDPHPAMLNYFDDLQAGREQSHPWWALVNEHFPNVLRHFGPFCSLNLIRSTMDFFEGCWIEQYNFGGFPGSDDYPQFLRRMNGLGHCVGASLWPKDLFDERKNFLEITTAVAQMENWMVWVNDLMSFYKEFDDERDQISLVKNFVTCHEITLDEALEKLTQETLHSSKQMVAVFADKDPQVMDTIECFMHGYVTWHLCDARYRLHEIYEKVKDQDTEDAKKFCKFFEQAANVGAVAPSEWAYPQVAQLANVRAKDDMKEAQKPILSSIELVE</sequence>
<keyword id="KW-0456">Lyase</keyword>
<protein>
    <recommendedName>
        <fullName>Trichodiene synthase</fullName>
        <ecNumber>4.2.3.6</ecNumber>
    </recommendedName>
    <alternativeName>
        <fullName>Sesquiterpene cyclase</fullName>
        <shortName>TS</shortName>
    </alternativeName>
</protein>
<name>TRI5_FUSCU</name>
<evidence type="ECO:0000305" key="1"/>
<feature type="chain" id="PRO_0000221579" description="Trichodiene synthase">
    <location>
        <begin position="1"/>
        <end position="375"/>
    </location>
</feature>
<feature type="sequence variant" description="In strain: IBT2303.">
    <original>Q</original>
    <variation>H</variation>
    <location>
        <position position="165"/>
    </location>
</feature>
<dbReference type="EC" id="4.2.3.6"/>
<dbReference type="EMBL" id="AY102571">
    <property type="protein sequence ID" value="AAM48782.1"/>
    <property type="molecule type" value="Genomic_DNA"/>
</dbReference>
<dbReference type="EMBL" id="AY102602">
    <property type="protein sequence ID" value="AAM49030.1"/>
    <property type="molecule type" value="Genomic_DNA"/>
</dbReference>
<dbReference type="EMBL" id="AY130291">
    <property type="protein sequence ID" value="AAN05033.1"/>
    <property type="molecule type" value="Genomic_DNA"/>
</dbReference>
<dbReference type="SMR" id="Q8NIG9"/>
<dbReference type="OMA" id="VTWHLCD"/>
<dbReference type="OrthoDB" id="2998174at2759"/>
<dbReference type="UniPathway" id="UPA00267"/>
<dbReference type="GO" id="GO:0045482">
    <property type="term" value="F:trichodiene synthase activity"/>
    <property type="evidence" value="ECO:0007669"/>
    <property type="project" value="UniProtKB-EC"/>
</dbReference>
<dbReference type="GO" id="GO:0016106">
    <property type="term" value="P:sesquiterpenoid biosynthetic process"/>
    <property type="evidence" value="ECO:0007669"/>
    <property type="project" value="InterPro"/>
</dbReference>
<dbReference type="Gene3D" id="1.10.600.10">
    <property type="entry name" value="Farnesyl Diphosphate Synthase"/>
    <property type="match status" value="1"/>
</dbReference>
<dbReference type="InterPro" id="IPR008949">
    <property type="entry name" value="Isoprenoid_synthase_dom_sf"/>
</dbReference>
<dbReference type="InterPro" id="IPR010458">
    <property type="entry name" value="TRI5_ascomyc"/>
</dbReference>
<dbReference type="InterPro" id="IPR024652">
    <property type="entry name" value="Trichodiene_synth"/>
</dbReference>
<dbReference type="Pfam" id="PF06330">
    <property type="entry name" value="TRI5"/>
    <property type="match status" value="1"/>
</dbReference>
<dbReference type="PIRSF" id="PIRSF001388">
    <property type="entry name" value="TRI5"/>
    <property type="match status" value="1"/>
</dbReference>
<dbReference type="SFLD" id="SFLDS00005">
    <property type="entry name" value="Isoprenoid_Synthase_Type_I"/>
    <property type="match status" value="1"/>
</dbReference>
<dbReference type="SFLD" id="SFLDG01021">
    <property type="entry name" value="Trichodiene_Synthase_Like"/>
    <property type="match status" value="1"/>
</dbReference>
<dbReference type="SUPFAM" id="SSF48576">
    <property type="entry name" value="Terpenoid synthases"/>
    <property type="match status" value="1"/>
</dbReference>
<gene>
    <name type="primary">TRI5</name>
</gene>
<accession>Q8NIG9</accession>
<accession>Q7Z8C2</accession>